<accession>B1IZL7</accession>
<feature type="chain" id="PRO_1000083850" description="2,3-diketo-L-gulonate reductase">
    <location>
        <begin position="1"/>
        <end position="332"/>
    </location>
</feature>
<feature type="active site" description="Proton donor" evidence="1">
    <location>
        <position position="44"/>
    </location>
</feature>
<feature type="binding site" evidence="1">
    <location>
        <begin position="168"/>
        <end position="174"/>
    </location>
    <ligand>
        <name>NAD(+)</name>
        <dbReference type="ChEBI" id="CHEBI:57540"/>
    </ligand>
</feature>
<feature type="binding site" evidence="1">
    <location>
        <begin position="224"/>
        <end position="225"/>
    </location>
    <ligand>
        <name>NAD(+)</name>
        <dbReference type="ChEBI" id="CHEBI:57540"/>
    </ligand>
</feature>
<feature type="binding site" evidence="1">
    <location>
        <begin position="304"/>
        <end position="306"/>
    </location>
    <ligand>
        <name>NAD(+)</name>
        <dbReference type="ChEBI" id="CHEBI:57540"/>
    </ligand>
</feature>
<dbReference type="EC" id="1.1.1.130" evidence="1"/>
<dbReference type="EMBL" id="CP000946">
    <property type="protein sequence ID" value="ACA75821.1"/>
    <property type="molecule type" value="Genomic_DNA"/>
</dbReference>
<dbReference type="SMR" id="B1IZL7"/>
<dbReference type="KEGG" id="ecl:EcolC_0139"/>
<dbReference type="HOGENOM" id="CLU_040452_4_0_6"/>
<dbReference type="GO" id="GO:0005737">
    <property type="term" value="C:cytoplasm"/>
    <property type="evidence" value="ECO:0007669"/>
    <property type="project" value="UniProtKB-SubCell"/>
</dbReference>
<dbReference type="GO" id="GO:0047559">
    <property type="term" value="F:3-dehydro-L-gulonate 2-dehydrogenase activity"/>
    <property type="evidence" value="ECO:0007669"/>
    <property type="project" value="UniProtKB-UniRule"/>
</dbReference>
<dbReference type="GO" id="GO:0070403">
    <property type="term" value="F:NAD+ binding"/>
    <property type="evidence" value="ECO:0007669"/>
    <property type="project" value="InterPro"/>
</dbReference>
<dbReference type="FunFam" id="1.10.1530.10:FF:000001">
    <property type="entry name" value="2,3-diketo-L-gulonate reductase"/>
    <property type="match status" value="1"/>
</dbReference>
<dbReference type="Gene3D" id="1.10.1530.10">
    <property type="match status" value="1"/>
</dbReference>
<dbReference type="Gene3D" id="3.30.1370.60">
    <property type="entry name" value="Hypothetical oxidoreductase yiak, domain 2"/>
    <property type="match status" value="1"/>
</dbReference>
<dbReference type="Gene3D" id="3.30.60.50">
    <property type="entry name" value="Hypothetical oxidoreductase yiak, domain 3"/>
    <property type="match status" value="1"/>
</dbReference>
<dbReference type="HAMAP" id="MF_00820">
    <property type="entry name" value="Diketo_gul_reduc"/>
    <property type="match status" value="1"/>
</dbReference>
<dbReference type="InterPro" id="IPR023689">
    <property type="entry name" value="Diketo_gul_Rdtase"/>
</dbReference>
<dbReference type="InterPro" id="IPR043144">
    <property type="entry name" value="Mal/L-sulf/L-lact_DH-like_ah"/>
</dbReference>
<dbReference type="InterPro" id="IPR043143">
    <property type="entry name" value="Mal/L-sulf/L-lact_DH-like_NADP"/>
</dbReference>
<dbReference type="InterPro" id="IPR036111">
    <property type="entry name" value="Mal/L-sulfo/L-lacto_DH-like_sf"/>
</dbReference>
<dbReference type="InterPro" id="IPR003767">
    <property type="entry name" value="Malate/L-lactate_DH-like"/>
</dbReference>
<dbReference type="NCBIfam" id="NF009750">
    <property type="entry name" value="PRK13260.1"/>
    <property type="match status" value="1"/>
</dbReference>
<dbReference type="PANTHER" id="PTHR11091:SF3">
    <property type="entry name" value="2,3-DIKETO-L-GULONATE REDUCTASE"/>
    <property type="match status" value="1"/>
</dbReference>
<dbReference type="PANTHER" id="PTHR11091">
    <property type="entry name" value="OXIDOREDUCTASE-RELATED"/>
    <property type="match status" value="1"/>
</dbReference>
<dbReference type="Pfam" id="PF02615">
    <property type="entry name" value="Ldh_2"/>
    <property type="match status" value="1"/>
</dbReference>
<dbReference type="SUPFAM" id="SSF89733">
    <property type="entry name" value="L-sulfolactate dehydrogenase-like"/>
    <property type="match status" value="1"/>
</dbReference>
<name>DLGD_ECOLC</name>
<comment type="function">
    <text evidence="1">Catalyzes the reduction of 2,3-diketo-L-gulonate in the presence of NADH, to form 3-keto-L-gulonate.</text>
</comment>
<comment type="catalytic activity">
    <reaction evidence="1">
        <text>3-dehydro-L-gulonate + NAD(+) = 2,3-dioxo-L-gulonate + NADH + H(+)</text>
        <dbReference type="Rhea" id="RHEA:21924"/>
        <dbReference type="ChEBI" id="CHEBI:15378"/>
        <dbReference type="ChEBI" id="CHEBI:57441"/>
        <dbReference type="ChEBI" id="CHEBI:57540"/>
        <dbReference type="ChEBI" id="CHEBI:57655"/>
        <dbReference type="ChEBI" id="CHEBI:57945"/>
        <dbReference type="EC" id="1.1.1.130"/>
    </reaction>
</comment>
<comment type="catalytic activity">
    <reaction evidence="1">
        <text>3-dehydro-L-gulonate + NADP(+) = 2,3-dioxo-L-gulonate + NADPH + H(+)</text>
        <dbReference type="Rhea" id="RHEA:21928"/>
        <dbReference type="ChEBI" id="CHEBI:15378"/>
        <dbReference type="ChEBI" id="CHEBI:57441"/>
        <dbReference type="ChEBI" id="CHEBI:57655"/>
        <dbReference type="ChEBI" id="CHEBI:57783"/>
        <dbReference type="ChEBI" id="CHEBI:58349"/>
        <dbReference type="EC" id="1.1.1.130"/>
    </reaction>
</comment>
<comment type="subunit">
    <text evidence="1">Homodimer.</text>
</comment>
<comment type="subcellular location">
    <subcellularLocation>
        <location evidence="1">Cytoplasm</location>
    </subcellularLocation>
</comment>
<comment type="similarity">
    <text evidence="1">Belongs to the LDH2/MDH2 oxidoreductase family. DlgD subfamily.</text>
</comment>
<evidence type="ECO:0000255" key="1">
    <source>
        <dbReference type="HAMAP-Rule" id="MF_00820"/>
    </source>
</evidence>
<protein>
    <recommendedName>
        <fullName evidence="1">2,3-diketo-L-gulonate reductase</fullName>
        <shortName evidence="1">2,3-DKG reductase</shortName>
        <ecNumber evidence="1">1.1.1.130</ecNumber>
    </recommendedName>
    <alternativeName>
        <fullName evidence="1">3-dehydro-L-gulonate 2-dehydrogenase</fullName>
    </alternativeName>
</protein>
<organism>
    <name type="scientific">Escherichia coli (strain ATCC 8739 / DSM 1576 / NBRC 3972 / NCIMB 8545 / WDCM 00012 / Crooks)</name>
    <dbReference type="NCBI Taxonomy" id="481805"/>
    <lineage>
        <taxon>Bacteria</taxon>
        <taxon>Pseudomonadati</taxon>
        <taxon>Pseudomonadota</taxon>
        <taxon>Gammaproteobacteria</taxon>
        <taxon>Enterobacterales</taxon>
        <taxon>Enterobacteriaceae</taxon>
        <taxon>Escherichia</taxon>
    </lineage>
</organism>
<proteinExistence type="inferred from homology"/>
<sequence>MKVTFEQLKAAFNRVLISRGVDSETADACAEMFARTTESGVYSHGVNRFPRFIQQLENGDIIPDAQPKRITSLGAIEQWDAQRSIGNLTAKKMMDRAIELAADHGIGLVALRNANHWMRGGSYGWQAAEKGYIGICWTNSIAVMPPWGAKECRIGTNPLIVAIPSTPITMVDMSMSMFSYGMLEVNRLAGRQLPVDGGFDDEGNLTKEPGVIEKNRRILPMGYWKGSGMSIVLDMIATLLSDGASVAEVTQDNSDEYGISQIFIAIEVDKLIDGPTRDAKLQRIMDYVTSAERADENQAIRLPGHEFTTLLAENRRNGITVDDSVWAKIQAL</sequence>
<gene>
    <name evidence="1" type="primary">dlgD</name>
    <name type="ordered locus">EcolC_0139</name>
</gene>
<reference key="1">
    <citation type="submission" date="2008-02" db="EMBL/GenBank/DDBJ databases">
        <title>Complete sequence of Escherichia coli C str. ATCC 8739.</title>
        <authorList>
            <person name="Copeland A."/>
            <person name="Lucas S."/>
            <person name="Lapidus A."/>
            <person name="Glavina del Rio T."/>
            <person name="Dalin E."/>
            <person name="Tice H."/>
            <person name="Bruce D."/>
            <person name="Goodwin L."/>
            <person name="Pitluck S."/>
            <person name="Kiss H."/>
            <person name="Brettin T."/>
            <person name="Detter J.C."/>
            <person name="Han C."/>
            <person name="Kuske C.R."/>
            <person name="Schmutz J."/>
            <person name="Larimer F."/>
            <person name="Land M."/>
            <person name="Hauser L."/>
            <person name="Kyrpides N."/>
            <person name="Mikhailova N."/>
            <person name="Ingram L."/>
            <person name="Richardson P."/>
        </authorList>
    </citation>
    <scope>NUCLEOTIDE SEQUENCE [LARGE SCALE GENOMIC DNA]</scope>
    <source>
        <strain>ATCC 8739 / DSM 1576 / NBRC 3972 / NCIMB 8545 / WDCM 00012 / Crooks</strain>
    </source>
</reference>
<keyword id="KW-0963">Cytoplasm</keyword>
<keyword id="KW-0520">NAD</keyword>
<keyword id="KW-0560">Oxidoreductase</keyword>